<evidence type="ECO:0000255" key="1">
    <source>
        <dbReference type="HAMAP-Rule" id="MF_00133"/>
    </source>
</evidence>
<dbReference type="EC" id="4.2.1.20" evidence="1"/>
<dbReference type="EMBL" id="BA000012">
    <property type="protein sequence ID" value="BAB51584.1"/>
    <property type="molecule type" value="Genomic_DNA"/>
</dbReference>
<dbReference type="RefSeq" id="WP_010912923.1">
    <property type="nucleotide sequence ID" value="NC_002678.2"/>
</dbReference>
<dbReference type="SMR" id="Q98CN7"/>
<dbReference type="GeneID" id="66680714"/>
<dbReference type="KEGG" id="mlo:mlr5071"/>
<dbReference type="eggNOG" id="COG0133">
    <property type="taxonomic scope" value="Bacteria"/>
</dbReference>
<dbReference type="HOGENOM" id="CLU_016734_3_1_5"/>
<dbReference type="UniPathway" id="UPA00035">
    <property type="reaction ID" value="UER00044"/>
</dbReference>
<dbReference type="Proteomes" id="UP000000552">
    <property type="component" value="Chromosome"/>
</dbReference>
<dbReference type="GO" id="GO:0005737">
    <property type="term" value="C:cytoplasm"/>
    <property type="evidence" value="ECO:0007669"/>
    <property type="project" value="TreeGrafter"/>
</dbReference>
<dbReference type="GO" id="GO:0004834">
    <property type="term" value="F:tryptophan synthase activity"/>
    <property type="evidence" value="ECO:0007669"/>
    <property type="project" value="UniProtKB-UniRule"/>
</dbReference>
<dbReference type="CDD" id="cd06446">
    <property type="entry name" value="Trp-synth_B"/>
    <property type="match status" value="1"/>
</dbReference>
<dbReference type="FunFam" id="3.40.50.1100:FF:000001">
    <property type="entry name" value="Tryptophan synthase beta chain"/>
    <property type="match status" value="1"/>
</dbReference>
<dbReference type="FunFam" id="3.40.50.1100:FF:000004">
    <property type="entry name" value="Tryptophan synthase beta chain"/>
    <property type="match status" value="1"/>
</dbReference>
<dbReference type="Gene3D" id="3.40.50.1100">
    <property type="match status" value="2"/>
</dbReference>
<dbReference type="HAMAP" id="MF_00133">
    <property type="entry name" value="Trp_synth_beta"/>
    <property type="match status" value="1"/>
</dbReference>
<dbReference type="InterPro" id="IPR006653">
    <property type="entry name" value="Trp_synth_b_CS"/>
</dbReference>
<dbReference type="InterPro" id="IPR006654">
    <property type="entry name" value="Trp_synth_beta"/>
</dbReference>
<dbReference type="InterPro" id="IPR023026">
    <property type="entry name" value="Trp_synth_beta/beta-like"/>
</dbReference>
<dbReference type="InterPro" id="IPR001926">
    <property type="entry name" value="TrpB-like_PALP"/>
</dbReference>
<dbReference type="InterPro" id="IPR036052">
    <property type="entry name" value="TrpB-like_PALP_sf"/>
</dbReference>
<dbReference type="NCBIfam" id="TIGR00263">
    <property type="entry name" value="trpB"/>
    <property type="match status" value="1"/>
</dbReference>
<dbReference type="PANTHER" id="PTHR48077:SF3">
    <property type="entry name" value="TRYPTOPHAN SYNTHASE"/>
    <property type="match status" value="1"/>
</dbReference>
<dbReference type="PANTHER" id="PTHR48077">
    <property type="entry name" value="TRYPTOPHAN SYNTHASE-RELATED"/>
    <property type="match status" value="1"/>
</dbReference>
<dbReference type="Pfam" id="PF00291">
    <property type="entry name" value="PALP"/>
    <property type="match status" value="1"/>
</dbReference>
<dbReference type="PIRSF" id="PIRSF001413">
    <property type="entry name" value="Trp_syn_beta"/>
    <property type="match status" value="1"/>
</dbReference>
<dbReference type="SUPFAM" id="SSF53686">
    <property type="entry name" value="Tryptophan synthase beta subunit-like PLP-dependent enzymes"/>
    <property type="match status" value="1"/>
</dbReference>
<dbReference type="PROSITE" id="PS00168">
    <property type="entry name" value="TRP_SYNTHASE_BETA"/>
    <property type="match status" value="1"/>
</dbReference>
<organism>
    <name type="scientific">Mesorhizobium japonicum (strain LMG 29417 / CECT 9101 / MAFF 303099)</name>
    <name type="common">Mesorhizobium loti (strain MAFF 303099)</name>
    <dbReference type="NCBI Taxonomy" id="266835"/>
    <lineage>
        <taxon>Bacteria</taxon>
        <taxon>Pseudomonadati</taxon>
        <taxon>Pseudomonadota</taxon>
        <taxon>Alphaproteobacteria</taxon>
        <taxon>Hyphomicrobiales</taxon>
        <taxon>Phyllobacteriaceae</taxon>
        <taxon>Mesorhizobium</taxon>
    </lineage>
</organism>
<proteinExistence type="inferred from homology"/>
<gene>
    <name evidence="1" type="primary">trpB</name>
    <name type="ordered locus">mlr5071</name>
</gene>
<sequence>MDQPATPNSFRTGPDEQGMFGIFGGRFVAETLMPLILDLERHWNEVKNDPDFRAELTDLSTHYAGRPSKLYFAEGLTKHLREVSSAKGLGGGAKVYFKREDLNHTGSHKINNCLGQILLAKRMGKKRIIAETGAGQHGVASATVAARFGYPCVVYMGATDVARQSPNVFRMKLLGAEVRPVTAGHGTLKDAMNEALRDWVTNVEDTYYLIGTAAGPHPYPELVRDFQSVIGTEARAQILEQEGRLPDTIIAAVGGGSNAIGLFHPFLDDKDVRIIGIEAGGRGLDGIEHCASMNAGSPGVLHGNRTYLLQNADGQIMDGHSISAGLDYPGVGPEHSWLRDSGRVEYVPILDDEALEAFKLTTRVEGIIPALESAHAIAHAVKIVPAMDKDQIVIVNLSGRGDKDVHTVASMLGMEI</sequence>
<reference key="1">
    <citation type="journal article" date="2000" name="DNA Res.">
        <title>Complete genome structure of the nitrogen-fixing symbiotic bacterium Mesorhizobium loti.</title>
        <authorList>
            <person name="Kaneko T."/>
            <person name="Nakamura Y."/>
            <person name="Sato S."/>
            <person name="Asamizu E."/>
            <person name="Kato T."/>
            <person name="Sasamoto S."/>
            <person name="Watanabe A."/>
            <person name="Idesawa K."/>
            <person name="Ishikawa A."/>
            <person name="Kawashima K."/>
            <person name="Kimura T."/>
            <person name="Kishida Y."/>
            <person name="Kiyokawa C."/>
            <person name="Kohara M."/>
            <person name="Matsumoto M."/>
            <person name="Matsuno A."/>
            <person name="Mochizuki Y."/>
            <person name="Nakayama S."/>
            <person name="Nakazaki N."/>
            <person name="Shimpo S."/>
            <person name="Sugimoto M."/>
            <person name="Takeuchi C."/>
            <person name="Yamada M."/>
            <person name="Tabata S."/>
        </authorList>
    </citation>
    <scope>NUCLEOTIDE SEQUENCE [LARGE SCALE GENOMIC DNA]</scope>
    <source>
        <strain>LMG 29417 / CECT 9101 / MAFF 303099</strain>
    </source>
</reference>
<protein>
    <recommendedName>
        <fullName evidence="1">Tryptophan synthase beta chain</fullName>
        <ecNumber evidence="1">4.2.1.20</ecNumber>
    </recommendedName>
</protein>
<comment type="function">
    <text evidence="1">The beta subunit is responsible for the synthesis of L-tryptophan from indole and L-serine.</text>
</comment>
<comment type="catalytic activity">
    <reaction evidence="1">
        <text>(1S,2R)-1-C-(indol-3-yl)glycerol 3-phosphate + L-serine = D-glyceraldehyde 3-phosphate + L-tryptophan + H2O</text>
        <dbReference type="Rhea" id="RHEA:10532"/>
        <dbReference type="ChEBI" id="CHEBI:15377"/>
        <dbReference type="ChEBI" id="CHEBI:33384"/>
        <dbReference type="ChEBI" id="CHEBI:57912"/>
        <dbReference type="ChEBI" id="CHEBI:58866"/>
        <dbReference type="ChEBI" id="CHEBI:59776"/>
        <dbReference type="EC" id="4.2.1.20"/>
    </reaction>
</comment>
<comment type="cofactor">
    <cofactor evidence="1">
        <name>pyridoxal 5'-phosphate</name>
        <dbReference type="ChEBI" id="CHEBI:597326"/>
    </cofactor>
</comment>
<comment type="pathway">
    <text evidence="1">Amino-acid biosynthesis; L-tryptophan biosynthesis; L-tryptophan from chorismate: step 5/5.</text>
</comment>
<comment type="subunit">
    <text evidence="1">Tetramer of two alpha and two beta chains.</text>
</comment>
<comment type="similarity">
    <text evidence="1">Belongs to the TrpB family.</text>
</comment>
<accession>Q98CN7</accession>
<name>TRPB_RHILO</name>
<feature type="chain" id="PRO_0000098989" description="Tryptophan synthase beta chain">
    <location>
        <begin position="1"/>
        <end position="416"/>
    </location>
</feature>
<feature type="modified residue" description="N6-(pyridoxal phosphate)lysine" evidence="1">
    <location>
        <position position="109"/>
    </location>
</feature>
<keyword id="KW-0028">Amino-acid biosynthesis</keyword>
<keyword id="KW-0057">Aromatic amino acid biosynthesis</keyword>
<keyword id="KW-0456">Lyase</keyword>
<keyword id="KW-0663">Pyridoxal phosphate</keyword>
<keyword id="KW-0822">Tryptophan biosynthesis</keyword>